<reference key="1">
    <citation type="journal article" date="1999" name="Proc. Natl. Acad. Sci. U.S.A.">
        <title>Arabidopsis thaliana PAD4 encodes a lipase-like gene that is important for salicylic acid signaling.</title>
        <authorList>
            <person name="Jirage D."/>
            <person name="Tootle T.L."/>
            <person name="Reuber T.L."/>
            <person name="Frost L.N."/>
            <person name="Feys B.J."/>
            <person name="Parker J.E."/>
            <person name="Ausubel F.M."/>
            <person name="Glazebrook J."/>
        </authorList>
    </citation>
    <scope>NUCLEOTIDE SEQUENCE [MRNA]</scope>
    <scope>FUNCTION</scope>
    <scope>DISRUPTION PHENOTYPE</scope>
    <scope>IDENTIFICATION</scope>
    <scope>INDUCTION BY P.SYRINGAE AND SALICYLIC ACID (SA)</scope>
    <source>
        <strain>cv. Columbia</strain>
    </source>
</reference>
<reference key="2">
    <citation type="journal article" date="2009" name="Genetics">
        <title>Arabidopsis thaliana genes encoding defense signaling and recognition proteins exhibit contrasting evolutionary dynamics.</title>
        <authorList>
            <person name="Caldwell K.S."/>
            <person name="Michelmore R.W."/>
        </authorList>
    </citation>
    <scope>NUCLEOTIDE SEQUENCE [GENOMIC DNA]</scope>
    <scope>REVIEW ON PLANT DEFENSE</scope>
    <source>
        <strain>cv. Aa-0</strain>
        <strain>cv. Ak-1</strain>
        <strain>cv. Bay-0</strain>
        <strain>cv. Columbia</strain>
        <strain>cv. Di-0</strain>
        <strain>cv. Gu-0</strain>
        <strain>cv. HOG</strain>
        <strain>cv. Landsberg erecta</strain>
        <strain>cv. Sha</strain>
        <strain>cv. Sorbo</strain>
        <strain>cv. Tsu-0</strain>
    </source>
</reference>
<reference key="3">
    <citation type="journal article" date="2000" name="Nature">
        <title>Sequence and analysis of chromosome 3 of the plant Arabidopsis thaliana.</title>
        <authorList>
            <person name="Salanoubat M."/>
            <person name="Lemcke K."/>
            <person name="Rieger M."/>
            <person name="Ansorge W."/>
            <person name="Unseld M."/>
            <person name="Fartmann B."/>
            <person name="Valle G."/>
            <person name="Bloecker H."/>
            <person name="Perez-Alonso M."/>
            <person name="Obermaier B."/>
            <person name="Delseny M."/>
            <person name="Boutry M."/>
            <person name="Grivell L.A."/>
            <person name="Mache R."/>
            <person name="Puigdomenech P."/>
            <person name="De Simone V."/>
            <person name="Choisne N."/>
            <person name="Artiguenave F."/>
            <person name="Robert C."/>
            <person name="Brottier P."/>
            <person name="Wincker P."/>
            <person name="Cattolico L."/>
            <person name="Weissenbach J."/>
            <person name="Saurin W."/>
            <person name="Quetier F."/>
            <person name="Schaefer M."/>
            <person name="Mueller-Auer S."/>
            <person name="Gabel C."/>
            <person name="Fuchs M."/>
            <person name="Benes V."/>
            <person name="Wurmbach E."/>
            <person name="Drzonek H."/>
            <person name="Erfle H."/>
            <person name="Jordan N."/>
            <person name="Bangert S."/>
            <person name="Wiedelmann R."/>
            <person name="Kranz H."/>
            <person name="Voss H."/>
            <person name="Holland R."/>
            <person name="Brandt P."/>
            <person name="Nyakatura G."/>
            <person name="Vezzi A."/>
            <person name="D'Angelo M."/>
            <person name="Pallavicini A."/>
            <person name="Toppo S."/>
            <person name="Simionati B."/>
            <person name="Conrad A."/>
            <person name="Hornischer K."/>
            <person name="Kauer G."/>
            <person name="Loehnert T.-H."/>
            <person name="Nordsiek G."/>
            <person name="Reichelt J."/>
            <person name="Scharfe M."/>
            <person name="Schoen O."/>
            <person name="Bargues M."/>
            <person name="Terol J."/>
            <person name="Climent J."/>
            <person name="Navarro P."/>
            <person name="Collado C."/>
            <person name="Perez-Perez A."/>
            <person name="Ottenwaelder B."/>
            <person name="Duchemin D."/>
            <person name="Cooke R."/>
            <person name="Laudie M."/>
            <person name="Berger-Llauro C."/>
            <person name="Purnelle B."/>
            <person name="Masuy D."/>
            <person name="de Haan M."/>
            <person name="Maarse A.C."/>
            <person name="Alcaraz J.-P."/>
            <person name="Cottet A."/>
            <person name="Casacuberta E."/>
            <person name="Monfort A."/>
            <person name="Argiriou A."/>
            <person name="Flores M."/>
            <person name="Liguori R."/>
            <person name="Vitale D."/>
            <person name="Mannhaupt G."/>
            <person name="Haase D."/>
            <person name="Schoof H."/>
            <person name="Rudd S."/>
            <person name="Zaccaria P."/>
            <person name="Mewes H.-W."/>
            <person name="Mayer K.F.X."/>
            <person name="Kaul S."/>
            <person name="Town C.D."/>
            <person name="Koo H.L."/>
            <person name="Tallon L.J."/>
            <person name="Jenkins J."/>
            <person name="Rooney T."/>
            <person name="Rizzo M."/>
            <person name="Walts A."/>
            <person name="Utterback T."/>
            <person name="Fujii C.Y."/>
            <person name="Shea T.P."/>
            <person name="Creasy T.H."/>
            <person name="Haas B."/>
            <person name="Maiti R."/>
            <person name="Wu D."/>
            <person name="Peterson J."/>
            <person name="Van Aken S."/>
            <person name="Pai G."/>
            <person name="Militscher J."/>
            <person name="Sellers P."/>
            <person name="Gill J.E."/>
            <person name="Feldblyum T.V."/>
            <person name="Preuss D."/>
            <person name="Lin X."/>
            <person name="Nierman W.C."/>
            <person name="Salzberg S.L."/>
            <person name="White O."/>
            <person name="Venter J.C."/>
            <person name="Fraser C.M."/>
            <person name="Kaneko T."/>
            <person name="Nakamura Y."/>
            <person name="Sato S."/>
            <person name="Kato T."/>
            <person name="Asamizu E."/>
            <person name="Sasamoto S."/>
            <person name="Kimura T."/>
            <person name="Idesawa K."/>
            <person name="Kawashima K."/>
            <person name="Kishida Y."/>
            <person name="Kiyokawa C."/>
            <person name="Kohara M."/>
            <person name="Matsumoto M."/>
            <person name="Matsuno A."/>
            <person name="Muraki A."/>
            <person name="Nakayama S."/>
            <person name="Nakazaki N."/>
            <person name="Shinpo S."/>
            <person name="Takeuchi C."/>
            <person name="Wada T."/>
            <person name="Watanabe A."/>
            <person name="Yamada M."/>
            <person name="Yasuda M."/>
            <person name="Tabata S."/>
        </authorList>
    </citation>
    <scope>NUCLEOTIDE SEQUENCE [LARGE SCALE GENOMIC DNA]</scope>
    <source>
        <strain>cv. Columbia</strain>
    </source>
</reference>
<reference key="4">
    <citation type="journal article" date="2017" name="Plant J.">
        <title>Araport11: a complete reannotation of the Arabidopsis thaliana reference genome.</title>
        <authorList>
            <person name="Cheng C.Y."/>
            <person name="Krishnakumar V."/>
            <person name="Chan A.P."/>
            <person name="Thibaud-Nissen F."/>
            <person name="Schobel S."/>
            <person name="Town C.D."/>
        </authorList>
    </citation>
    <scope>GENOME REANNOTATION</scope>
    <source>
        <strain>cv. Columbia</strain>
    </source>
</reference>
<reference key="5">
    <citation type="journal article" date="2008" name="Genetics">
        <title>Low levels of polymorphism in genes that control the activation of defense response in Arabidopsis thaliana.</title>
        <authorList>
            <person name="Bakker E.G."/>
            <person name="Traw M.B."/>
            <person name="Toomajian C."/>
            <person name="Kreitman M."/>
            <person name="Bergelson J."/>
        </authorList>
    </citation>
    <scope>NUCLEOTIDE SEQUENCE [GENOMIC DNA] OF 227-434</scope>
    <scope>REVIEW ON PLANT DEFENSE</scope>
</reference>
<reference key="6">
    <citation type="journal article" date="1996" name="Genetics">
        <title>Isolation of Arabidopsis mutants with enhanced disease susceptibility by direct screening.</title>
        <authorList>
            <person name="Glazebrook J."/>
            <person name="Rogers E.E."/>
            <person name="Ausubel F.M."/>
        </authorList>
    </citation>
    <scope>FUNCTION</scope>
    <scope>DISRUPTION PHENOTYPE</scope>
    <source>
        <strain>cv. Columbia</strain>
    </source>
</reference>
<reference key="7">
    <citation type="journal article" date="1997" name="Genetics">
        <title>Phytoalexin-deficient mutants of Arabidopsis reveal that PAD4 encodes a regulatory factor and that four PAD genes contribute to downy mildew resistance.</title>
        <authorList>
            <person name="Glazebrook J."/>
            <person name="Zook M."/>
            <person name="Mert F."/>
            <person name="Kagan I."/>
            <person name="Rogers E.E."/>
            <person name="Crute I.R."/>
            <person name="Holub E.B."/>
            <person name="Hammerschmidt R."/>
            <person name="Ausubel F.M."/>
        </authorList>
    </citation>
    <scope>FUNCTION</scope>
    <scope>DISRUPTION PHENOTYPE</scope>
    <source>
        <strain>cv. Columbia</strain>
    </source>
</reference>
<reference key="8">
    <citation type="journal article" date="1998" name="Plant Cell">
        <title>PAD4 functions upstream from salicylic acid to control defense responses in Arabidopsis.</title>
        <authorList>
            <person name="Zhou N."/>
            <person name="Tootle T.L."/>
            <person name="Tsui F."/>
            <person name="Klessig D.F."/>
            <person name="Glazebrook J."/>
        </authorList>
    </citation>
    <scope>FUNCTION</scope>
    <scope>DISRUPTION PHENOTYPE</scope>
    <source>
        <strain>cv. Columbia</strain>
    </source>
</reference>
<reference key="9">
    <citation type="journal article" date="1998" name="Plant J.">
        <title>Correlation of defense gene induction defects with powdery mildew susceptibility in Arabidopsis enhanced disease susceptibility mutants.</title>
        <authorList>
            <person name="Reuber T.L."/>
            <person name="Plotnikova J.M."/>
            <person name="Dewdney J."/>
            <person name="Rogers E.E."/>
            <person name="Wood W."/>
            <person name="Ausubel F.M."/>
        </authorList>
    </citation>
    <scope>FUNCTION</scope>
    <scope>DISRUPTION PHENOTYPE</scope>
    <source>
        <strain>cv. Columbia</strain>
        <strain>cv. Landsberg erecta</strain>
    </source>
</reference>
<reference key="10">
    <citation type="journal article" date="2000" name="Mol. Plant Microbe Interact.">
        <title>Arabidopsis thaliana EDS4 contributes to salicylic acid (SA)-dependent expression of defense responses: evidence for inhibition of jasmonic acid signaling by SA.</title>
        <authorList>
            <person name="Gupta V."/>
            <person name="Willits M.G."/>
            <person name="Glazebrook J."/>
        </authorList>
    </citation>
    <scope>FUNCTION</scope>
    <scope>DISRUPTION PHENOTYPE</scope>
    <source>
        <strain>cv. Columbia</strain>
    </source>
</reference>
<reference key="11">
    <citation type="journal article" date="2000" name="Plant Cell">
        <title>Fumonisin B1-induced cell death in arabidopsis protoplasts requires jasmonate-, ethylene-, and salicylate-dependent signaling pathways.</title>
        <authorList>
            <person name="Asai T."/>
            <person name="Stone J.M."/>
            <person name="Heard J.E."/>
            <person name="Kovtun Y."/>
            <person name="Yorgey P."/>
            <person name="Sheen J."/>
            <person name="Ausubel F.M."/>
        </authorList>
    </citation>
    <scope>FUNCTION</scope>
    <scope>DISRUPTION PHENOTYPE</scope>
    <source>
        <strain>cv. Columbia</strain>
    </source>
</reference>
<reference key="12">
    <citation type="journal article" date="2001" name="EMBO J.">
        <title>Direct interaction between the Arabidopsis disease resistance signaling proteins, EDS1 and PAD4.</title>
        <authorList>
            <person name="Feys B.J."/>
            <person name="Moisan L.J."/>
            <person name="Newman M.-A."/>
            <person name="Parker J.E."/>
        </authorList>
    </citation>
    <scope>FUNCTION</scope>
    <scope>DISRUPTION PHENOTYPE</scope>
    <scope>INTERACTION WITH EDS1</scope>
    <scope>INDUCTION BY SALICYLIC ACID AND PATHOGENS</scope>
</reference>
<reference key="13">
    <citation type="journal article" date="2001" name="Plant Cell">
        <title>The disease resistance signaling components EDS1 and PAD4 are essential regulators of the cell death pathway controlled by LSD1 in Arabidopsis.</title>
        <authorList>
            <person name="Rusterucci C."/>
            <person name="Aviv D.H."/>
            <person name="Holt B.F. III"/>
            <person name="Dangl J.L."/>
            <person name="Parker J.E."/>
        </authorList>
    </citation>
    <scope>FUNCTION</scope>
    <scope>DISRUPTION PHENOTYPE</scope>
</reference>
<reference key="14">
    <citation type="journal article" date="2002" name="Plant Cell">
        <title>EDS5, an essential component of salicylic acid-dependent signaling for disease resistance in Arabidopsis, is a member of the MATE transporter family.</title>
        <authorList>
            <person name="Nawrath C."/>
            <person name="Heck S."/>
            <person name="Parinthawong N."/>
            <person name="Metraux J.-P."/>
        </authorList>
    </citation>
    <scope>FUNCTION</scope>
    <scope>DISRUPTION PHENOTYPE</scope>
</reference>
<reference key="15">
    <citation type="journal article" date="2002" name="Plant J.">
        <title>Arabidopsis RPP4 is a member of the RPP5 multigene family of TIR-NB-LRR genes and confers downy mildew resistance through multiple signalling components.</title>
        <authorList>
            <person name="van der Biezen E.A."/>
            <person name="Freddie C.T."/>
            <person name="Kahn K."/>
            <person name="Parker J.E."/>
            <person name="Jones J.D."/>
        </authorList>
    </citation>
    <scope>FUNCTION</scope>
    <scope>DISRUPTION PHENOTYPE</scope>
</reference>
<reference key="16">
    <citation type="journal article" date="2003" name="Plant J.">
        <title>Genetic evidence that expression of NahG modifies defence pathways independent of salicylic acid biosynthesis in the Arabidopsis-Pseudomonas syringae pv. tomato interaction.</title>
        <authorList>
            <person name="Heck S."/>
            <person name="Grau T."/>
            <person name="Buchala A."/>
            <person name="Metraux J.P."/>
            <person name="Nawrath C."/>
        </authorList>
    </citation>
    <scope>FUNCTION</scope>
    <scope>DISRUPTION PHENOTYPE</scope>
</reference>
<reference key="17">
    <citation type="journal article" date="2004" name="Plant J.">
        <title>A key role for ALD1 in activation of local and systemic defenses in Arabidopsis.</title>
        <authorList>
            <person name="Song J.T."/>
            <person name="Lu H."/>
            <person name="McDowell J.M."/>
            <person name="Greenberg J.T."/>
        </authorList>
    </citation>
    <scope>FUNCTION</scope>
    <scope>DISRUPTION PHENOTYPE</scope>
</reference>
<reference key="18">
    <citation type="journal article" date="2004" name="Plant Physiol.">
        <title>LESION SIMULATING DISEASE 1 is required for acclimation to conditions that promote excess excitation energy.</title>
        <authorList>
            <person name="Mateo A."/>
            <person name="Muhlenbock P."/>
            <person name="Rusterucci C."/>
            <person name="Chang C.C."/>
            <person name="Miszalski Z."/>
            <person name="Karpinska B."/>
            <person name="Parker J.E."/>
            <person name="Mullineaux P.M."/>
            <person name="Karpinski S."/>
        </authorList>
    </citation>
    <scope>FUNCTION</scope>
    <scope>DISRUPTION PHENOTYPE</scope>
</reference>
<reference key="19">
    <citation type="journal article" date="2005" name="Curr. Opin. Plant Biol.">
        <title>Plant immunity: the EDS1 regulatory node.</title>
        <authorList>
            <person name="Wiermer M."/>
            <person name="Feys B.J."/>
            <person name="Parker J.E."/>
        </authorList>
    </citation>
    <scope>REVIEW</scope>
</reference>
<reference key="20">
    <citation type="journal article" date="2005" name="Mol. Plant Microbe Interact.">
        <title>Genetic analysis of developmentally regulated resistance to downy mildew (Hyaloperonospora parasitica) in Arabidopsis thaliana.</title>
        <authorList>
            <person name="McDowell J.M."/>
            <person name="Williams S.G."/>
            <person name="Funderburg N.T."/>
            <person name="Eulgem T."/>
            <person name="Dangl J.L."/>
        </authorList>
    </citation>
    <scope>FUNCTION</scope>
    <scope>DISRUPTION PHENOTYPE</scope>
</reference>
<reference key="21">
    <citation type="journal article" date="2005" name="Plant Cell">
        <title>Arabidopsis SENESCENCE-ASSOCIATED GENE101 stabilizes and signals within an ENHANCED DISEASE SUSCEPTIBILITY1 complex in plant innate immunity.</title>
        <authorList>
            <person name="Feys B.J."/>
            <person name="Wiermer M."/>
            <person name="Bhat R.A."/>
            <person name="Moisan L.J."/>
            <person name="Medina-Escobar N."/>
            <person name="Neu C."/>
            <person name="Cabral A."/>
            <person name="Parker J.E."/>
        </authorList>
    </citation>
    <scope>FUNCTION</scope>
    <scope>INTERACTION WITH EDS1</scope>
    <scope>SUBCELLULAR LOCATION</scope>
</reference>
<reference key="22">
    <citation type="journal article" date="2005" name="Plant J.">
        <title>The atypical resistance gene, RPW8, recruits components of basal defence for powdery mildew resistance in Arabidopsis.</title>
        <authorList>
            <person name="Xiao S."/>
            <person name="Calis O."/>
            <person name="Patrick E."/>
            <person name="Zhang G."/>
            <person name="Charoenwattana P."/>
            <person name="Muskett P."/>
            <person name="Parker J.E."/>
            <person name="Turner J.G."/>
        </authorList>
    </citation>
    <scope>FUNCTION</scope>
    <scope>DISRUPTION PHENOTYPE</scope>
</reference>
<reference key="23">
    <citation type="journal article" date="2005" name="Plant Physiol.">
        <title>Premature leaf senescence modulated by the Arabidopsis PHYTOALEXIN DEFICIENT4 gene is associated with defense against the phloem-feeding green peach aphid.</title>
        <authorList>
            <person name="Pegadaraju V."/>
            <person name="Knepper C."/>
            <person name="Reese J."/>
            <person name="Shah J."/>
        </authorList>
    </citation>
    <scope>FUNCTION</scope>
    <scope>DISRUPTION PHENOTYPE</scope>
    <scope>INDUCTION BY GREEN PEACH APHID</scope>
</reference>
<reference key="24">
    <citation type="journal article" date="2006" name="Plant J.">
        <title>Arabidopsis MAP kinase 4 regulates salicylic acid- and jasmonic acid/ethylene-dependent responses via EDS1 and PAD4.</title>
        <authorList>
            <person name="Brodersen P."/>
            <person name="Petersen M."/>
            <person name="Bjorn Nielsen H."/>
            <person name="Zhu S."/>
            <person name="Newman M.A."/>
            <person name="Shokat K.M."/>
            <person name="Rietz S."/>
            <person name="Parker J."/>
            <person name="Mundy J."/>
        </authorList>
    </citation>
    <scope>FUNCTION</scope>
    <scope>DISRUPTION PHENOTYPE</scope>
</reference>
<reference key="25">
    <citation type="journal article" date="2007" name="Plant Cell">
        <title>Lysigenous aerenchyma formation in Arabidopsis is controlled by LESION SIMULATING DISEASE1.</title>
        <authorList>
            <person name="Muehlenbock P."/>
            <person name="Plaszczyca M."/>
            <person name="Plaszczyca M."/>
            <person name="Mellerowicz E."/>
            <person name="Karpinski S."/>
        </authorList>
    </citation>
    <scope>FUNCTION</scope>
    <scope>DISRUPTION PHENOTYPE</scope>
</reference>
<reference key="26">
    <citation type="journal article" date="2007" name="Plant J.">
        <title>Phloem-based resistance to green peach aphid is controlled by Arabidopsis PHYTOALEXIN DEFICIENT4 without its signaling partner ENHANCED DISEASE SUSCEPTIBILITY1.</title>
        <authorList>
            <person name="Pegadaraju V."/>
            <person name="Louis J."/>
            <person name="Singh V."/>
            <person name="Reese J.C."/>
            <person name="Bautor J."/>
            <person name="Feys B.J."/>
            <person name="Cook G."/>
            <person name="Parker J.E."/>
            <person name="Shah J."/>
        </authorList>
    </citation>
    <scope>FUNCTION</scope>
    <scope>DISRUPTION PHENOTYPE</scope>
    <source>
        <strain>cv. Columbia</strain>
        <strain>cv. Landsberg erecta</strain>
        <strain>cv. Wassilewskija</strain>
    </source>
</reference>
<reference key="27">
    <citation type="journal article" date="2007" name="Proc. Natl. Acad. Sci. U.S.A.">
        <title>Plastidial fatty acid levels regulate resistance gene-dependent defense signaling in Arabidopsis.</title>
        <authorList>
            <person name="Chandra-Shekara A.C."/>
            <person name="Venugopal S.C."/>
            <person name="Barman S.R."/>
            <person name="Kachroo A."/>
            <person name="Kachroo P."/>
        </authorList>
    </citation>
    <scope>FUNCTION</scope>
    <scope>DISRUPTION PHENOTYPE</scope>
</reference>
<reference key="28">
    <citation type="journal article" date="2008" name="Plant J.">
        <title>Interplay between MAMP-triggered and SA-mediated defense responses.</title>
        <authorList>
            <person name="Tsuda K."/>
            <person name="Sato M."/>
            <person name="Glazebrook J."/>
            <person name="Cohen J.D."/>
            <person name="Katagiri F."/>
        </authorList>
    </citation>
    <scope>FUNCTION</scope>
    <scope>DISRUPTION PHENOTYPE</scope>
</reference>
<reference key="29">
    <citation type="journal article" date="2008" name="Plant J.">
        <title>Arabidopsis proteins important for modulating defense responses to Pseudomonas syringae that secrete HopW1-1.</title>
        <authorList>
            <person name="Lee M.W."/>
            <person name="Jelenska J."/>
            <person name="Greenberg J.T."/>
        </authorList>
    </citation>
    <scope>FUNCTION</scope>
    <scope>DISRUPTION PHENOTYPE</scope>
</reference>
<reference key="30">
    <citation type="journal article" date="2010" name="Mol. Plant Microbe Interact.">
        <title>PAD4-dependent antibiosis contributes to the ssi2-conferred hyper-resistance to the green peach aphid.</title>
        <authorList>
            <person name="Louis J."/>
            <person name="Leung Q."/>
            <person name="Pegadaraju V."/>
            <person name="Reese J."/>
            <person name="Shah J."/>
        </authorList>
    </citation>
    <scope>FUNCTION</scope>
    <scope>DISRUPTION PHENOTYPE</scope>
</reference>
<reference key="31">
    <citation type="journal article" date="2011" name="New Phytol.">
        <title>Different roles of Enhanced Disease Susceptibility1 (EDS1) bound to and dissociated from Phytoalexin Deficient4 (PAD4) in Arabidopsis immunity.</title>
        <authorList>
            <person name="Rietz S."/>
            <person name="Stamm A."/>
            <person name="Malonek S."/>
            <person name="Wagner S."/>
            <person name="Becker D."/>
            <person name="Medina-Escobar N."/>
            <person name="Vlot A.C."/>
            <person name="Feys B.J."/>
            <person name="Niefind K."/>
            <person name="Parker J.E."/>
        </authorList>
    </citation>
    <scope>FUNCTION</scope>
    <scope>INTERACTION WITH EDS1</scope>
    <scope>INDUCTION BY HYALOPERONOSPORA ARABIDOPSIDIS</scope>
    <scope>SUBCELLULAR LOCATION</scope>
    <source>
        <strain>cv. Wassilewskija</strain>
    </source>
</reference>
<reference key="32">
    <citation type="journal article" date="2011" name="Plant J.">
        <title>TREHALOSE PHOSPHATE SYNTHASE11-dependent trehalose metabolism promotes Arabidopsis thaliana defense against the phloem-feeding insect Myzus persicae.</title>
        <authorList>
            <person name="Singh V."/>
            <person name="Louis J."/>
            <person name="Ayre B.G."/>
            <person name="Reese J.C."/>
            <person name="Pegadaraju V."/>
            <person name="Shah J."/>
        </authorList>
    </citation>
    <scope>INDUCTION BY GREEN PEACH APHID AND TREHALOSE</scope>
</reference>
<reference key="33">
    <citation type="journal article" date="2011" name="PLoS Pathog.">
        <title>SAG101 forms a ternary complex with EDS1 and PAD4 and is required for resistance signaling against turnip crinkle virus.</title>
        <authorList>
            <person name="Zhu S."/>
            <person name="Jeong R.-D."/>
            <person name="Venugopal S.C."/>
            <person name="Lapchyk L."/>
            <person name="Navarre D."/>
            <person name="Kachroo A."/>
            <person name="Kachroo P."/>
        </authorList>
    </citation>
    <scope>FUNCTION</scope>
    <scope>SUBCELLULAR LOCATION</scope>
    <scope>SUBUNIT</scope>
    <scope>INTERACTION WITH EDS1</scope>
</reference>
<reference key="34">
    <citation type="journal article" date="2012" name="Plant Cell">
        <title>Natural variation in small molecule-induced TIR-NB-LRR signaling induces root growth arrest via EDS1- and PAD4-complexed R protein VICTR in Arabidopsis.</title>
        <authorList>
            <person name="Kim T.H."/>
            <person name="Kunz H.H."/>
            <person name="Bhattacharjee S."/>
            <person name="Hauser F."/>
            <person name="Park J."/>
            <person name="Engineer C."/>
            <person name="Liu A."/>
            <person name="Ha T."/>
            <person name="Parker J.E."/>
            <person name="Gassmann W."/>
            <person name="Schroeder J.I."/>
        </authorList>
    </citation>
    <scope>FUNCTION</scope>
    <scope>DISRUPTION PHENOTYPE</scope>
    <scope>INTERACTION WITH VICTR</scope>
    <scope>SUBUNIT</scope>
    <source>
        <strain>cv. Columbia</strain>
    </source>
</reference>
<reference key="35">
    <citation type="journal article" date="2012" name="Plant Physiol.">
        <title>Discrimination of Arabidopsis PAD4 activities in defense against green peach aphid and pathogens.</title>
        <authorList>
            <person name="Louis J."/>
            <person name="Gobbato E."/>
            <person name="Mondal H.A."/>
            <person name="Feys B.J."/>
            <person name="Parker J.E."/>
            <person name="Shah J."/>
        </authorList>
    </citation>
    <scope>FUNCTION</scope>
    <scope>DISRUPTION PHENOTYPE</scope>
    <scope>MUTAGENESIS OF SER-118</scope>
</reference>
<reference key="36">
    <citation type="journal article" date="2012" name="Plant Signal. Behav.">
        <title>Green peach aphid infestation induces Arabidopsis PHYTOALEXIN-DEFICIENT4 expression at site of insect feeding.</title>
        <authorList>
            <person name="Louis J."/>
            <person name="Mondal H.A."/>
            <person name="Shah J."/>
        </authorList>
    </citation>
    <scope>INDUCTION BY GREEN PEACH APHID</scope>
</reference>
<reference key="37">
    <citation type="journal article" date="2013" name="Plant Physiol.">
        <title>Lesion simulating disease1, enhanced disease susceptibility1, and phytoalexin deficient4 conditionally regulate cellular signaling homeostasis, photosynthesis, water use efficiency, and seed yield in Arabidopsis.</title>
        <authorList>
            <person name="Wituszynska W."/>
            <person name="Slesak I."/>
            <person name="Vanderauwera S."/>
            <person name="Szechynska-Hebda M."/>
            <person name="Kornas A."/>
            <person name="Van Der Kelen K."/>
            <person name="Muhlenbock P."/>
            <person name="Karpinska B."/>
            <person name="Mackowski S."/>
            <person name="Van Breusegem F."/>
            <person name="Karpinski S."/>
        </authorList>
    </citation>
    <scope>FUNCTION</scope>
    <scope>DISRUPTION PHENOTYPE</scope>
</reference>
<reference key="38">
    <citation type="journal article" date="2013" name="Cell Host Microbe">
        <title>Structural basis for signaling by exclusive EDS1 heteromeric complexes with SAG101 or PAD4 in plant innate immunity.</title>
        <authorList>
            <person name="Wagner S."/>
            <person name="Stuttmann J."/>
            <person name="Rietz S."/>
            <person name="Guerois R."/>
            <person name="Brunstein E."/>
            <person name="Bautor J."/>
            <person name="Niefind K."/>
            <person name="Parker J.E."/>
        </authorList>
    </citation>
    <scope>INTERACTION WITH EDS1</scope>
    <scope>3D-STRUCTURE MODELING</scope>
    <scope>MUTAGENESIS OF MET-16; LEU-21 AND PHE-143</scope>
</reference>
<comment type="function">
    <text evidence="2 3 4 5 6 7 8 9 10 11 12 13 14 15 16 17 18 19 20 21 22 24 25 26 28 29 31 32 33 34">Probable lipase required downstream of MPK4 for accumulation of the plant defense-potentiating molecule, salicylic acid, thus contributing to the plant innate immunity against invasive biotrophic pathogens and to defense mechanisms upon recognition of microbe-associated molecular patterns (MAMPs). Participates in the regulation of various molecular and physiological processes that influence fitness. Together with SG101, required for programmed cell death (PCD) triggered by NBS-LRR resistance proteins (e.g. RPS4, RPW8.1 and RPW8.2) in response to the fungal toxin fumonisin B1 (FB1) and avirulent pathogens (e.g. P.syringae pv. tomato strain DC3000 avrRps4 and pv. maculicola, turnip crinkle virus (TCV), and H.arabidopsidis isolates CALA2, EMOY2, EMWA1 and HIND4). Together with EDS1, confers a basal resistance by restricting the growth of virulent pathogens (e.g. H.arabidopsidis isolates NOCO2 and EMCO5, E.orontii isolate MGH, and P.syringae pv. tomato strain DC3000 or expressing HopW1-1 (HopPmaA)). Necessary for the salicylic acid-(SA-) dependent systemic acquired resistance (SAR) response that involves expression of multiple defense responses, including synthesis of the phytoalexin camalexin and expression of pathogenesis-related genes (e.g. PR1, ALD1, BGL2 and PR5) in response to pathogens, triggering a signal amplification loop that increases SA levels via EDS5 and SID2, but, together with EDS1, seems to repress the ethylene/jasmonic acid (ET/JA) defense pathway. May also function in response to abiotic stresses such as UV-C light and LSD1-dependent acclimatization to light conditions that promote excess excitation energy (EEE), probably by transducing redox signals and modulating stomatal conductance. Regulates the formation of lysigenous aerenchyma in hypocotyls in response to hypoxia, maybe via hydrogen peroxide production. Modulates leaf senescence in insect-infested tissue and triggers a phloem-based defense mechanism including antibiosis (e.g. green peach aphid (GPA), M.persicae) to limit phloem sap uptake and insect growth, thus providing an EDS1-independent basal resistance to insects. Also involved in regulation of root meristematic zone-targeted growth arrest together with EDS1 and in a VICTR-dependent manner.</text>
</comment>
<comment type="subunit">
    <text evidence="5 13 24 25 28 30">Part of a nuclear complex made of EDS1, SG101 and PAD4 that can be redirected to the cytoplasm in the presence of an extranuclear form of EDS1. Sabilized by direct interaction with EDS1 in infected leaves. Part of a nuclear protein complex made of VICTR, PAD4 and EDS1 (PubMed:23275581). Interacts with VICTR (PubMed:23275581). Interacts with EDS1 (PubMed:24331460).</text>
</comment>
<comment type="interaction">
    <interactant intactId="EBI-1390441">
        <id>Q9S745</id>
    </interactant>
    <interactant intactId="EBI-1390454">
        <id>Q9SU72</id>
        <label>EDS1</label>
    </interactant>
    <organismsDiffer>false</organismsDiffer>
    <experiments>8</experiments>
</comment>
<comment type="subcellular location">
    <subcellularLocation>
        <location>Nucleus</location>
    </subcellularLocation>
    <subcellularLocation>
        <location>Cytoplasm</location>
    </subcellularLocation>
    <text>Can move to the cytoplasm when in complex with EDS1.</text>
</comment>
<comment type="induction">
    <text evidence="2 5 14 23 24 27">By benzothiadiazole (BTH), at site of green peach aphid feeding (GPA, M.persicae) via TPS11-dependent trehalose accumulation, and H.arabidopsidis. Induced by P.syringae in a NPR1-independent manner, and by salicylic acid (SA) in a NPR1-dependent manner.</text>
</comment>
<comment type="disruption phenotype">
    <text evidence="2 3 4 5 6 7 8 9 10 11 12 14 15 16 17 18 19 20 21 22 26 28 29 31 32 33 34">Impaired camalexin accumulation, reduced synthesis of salicylic acid (SA) and ethylene (ET), and altered expression of pathogenesis-related genes (e.g. PR1, ALD1, BGL2 and PR5) upon some pathogenic infections (e.g. P.syringae) and microbe-associated molecular patterns (MAMPs) recognition. Loss of the systemic acquired resistance response. Reduced fitness characterized by lower seed yield and survival rate. Increased sensitivity to P.syringae, H.arabidopsidis, turnip crinkle virus (TCV) and E.orontii. These phenotypes are reversed by SA treatment. Altered sensitivity to jasmonic acid (JA) and ethylene (ET) signaling. Decreased susceptibility to the fungal toxin fumonisin B1 (FB1) that mediates programmed cell death (PCD). Impaired induction of EDS5/SID1 expression after UV-C light exposure and pathogen attack. Altered LSD1-dependent acclimatization to light conditions that promote excess excitation energy (EEE). Impaired formation of lysigenous aerenchyma in response to hypoxia. Reduced resistance against green peach aphid (GPA, M.persicae) due to increased phloem sap uptake, reduced accumulation of antibiotic activity in petiole exudates, and delayed leaf senescence in insect-infested tissue, including chlorophyll loss, cell death, and senescence associated genes (SAG) expression. Loss of [5-(3,4-dichlorophenyl)furan-2-yl]-piperidine-1-ylmethanethione- (DFPM-) induced root growth arrest and inhibition of stomatal closing mediated by abscisic acid (ABA).</text>
</comment>
<comment type="similarity">
    <text evidence="35">Belongs to the AB hydrolase superfamily. Lipase family.</text>
</comment>
<dbReference type="EC" id="2.3.1.-"/>
<dbReference type="EMBL" id="AF188329">
    <property type="protein sequence ID" value="AAF09479.1"/>
    <property type="molecule type" value="mRNA"/>
</dbReference>
<dbReference type="EMBL" id="EF470727">
    <property type="protein sequence ID" value="ABR46037.1"/>
    <property type="molecule type" value="Genomic_DNA"/>
</dbReference>
<dbReference type="EMBL" id="EF470728">
    <property type="protein sequence ID" value="ABR46038.1"/>
    <property type="molecule type" value="Genomic_DNA"/>
</dbReference>
<dbReference type="EMBL" id="EF470729">
    <property type="protein sequence ID" value="ABR46039.1"/>
    <property type="molecule type" value="Genomic_DNA"/>
</dbReference>
<dbReference type="EMBL" id="EF470731">
    <property type="protein sequence ID" value="ABR46041.1"/>
    <property type="molecule type" value="Genomic_DNA"/>
</dbReference>
<dbReference type="EMBL" id="EF470733">
    <property type="protein sequence ID" value="ABR46043.1"/>
    <property type="molecule type" value="Genomic_DNA"/>
</dbReference>
<dbReference type="EMBL" id="EF470735">
    <property type="protein sequence ID" value="ABR46045.1"/>
    <property type="molecule type" value="Genomic_DNA"/>
</dbReference>
<dbReference type="EMBL" id="EF470736">
    <property type="protein sequence ID" value="ABR46046.1"/>
    <property type="molecule type" value="Genomic_DNA"/>
</dbReference>
<dbReference type="EMBL" id="EF470737">
    <property type="protein sequence ID" value="ABR46047.1"/>
    <property type="molecule type" value="Genomic_DNA"/>
</dbReference>
<dbReference type="EMBL" id="EF470741">
    <property type="protein sequence ID" value="ABR46051.1"/>
    <property type="molecule type" value="Genomic_DNA"/>
</dbReference>
<dbReference type="EMBL" id="EF470742">
    <property type="protein sequence ID" value="ABR46052.1"/>
    <property type="molecule type" value="Genomic_DNA"/>
</dbReference>
<dbReference type="EMBL" id="EF470743">
    <property type="protein sequence ID" value="ABR46053.1"/>
    <property type="molecule type" value="Genomic_DNA"/>
</dbReference>
<dbReference type="EMBL" id="AL050300">
    <property type="protein sequence ID" value="CAB43438.1"/>
    <property type="molecule type" value="Genomic_DNA"/>
</dbReference>
<dbReference type="EMBL" id="CP002686">
    <property type="protein sequence ID" value="AEE78945.1"/>
    <property type="molecule type" value="Genomic_DNA"/>
</dbReference>
<dbReference type="EMBL" id="EU405144">
    <property type="protein sequence ID" value="ABZ02805.1"/>
    <property type="molecule type" value="Genomic_DNA"/>
</dbReference>
<dbReference type="EMBL" id="EU405145">
    <property type="protein sequence ID" value="ABZ02806.1"/>
    <property type="molecule type" value="Genomic_DNA"/>
</dbReference>
<dbReference type="EMBL" id="EU405146">
    <property type="protein sequence ID" value="ABZ02807.1"/>
    <property type="molecule type" value="Genomic_DNA"/>
</dbReference>
<dbReference type="EMBL" id="EU405149">
    <property type="protein sequence ID" value="ABZ02810.1"/>
    <property type="molecule type" value="Genomic_DNA"/>
</dbReference>
<dbReference type="EMBL" id="EU405150">
    <property type="protein sequence ID" value="ABZ02811.1"/>
    <property type="molecule type" value="Genomic_DNA"/>
</dbReference>
<dbReference type="EMBL" id="EU405152">
    <property type="protein sequence ID" value="ABZ02813.1"/>
    <property type="molecule type" value="Genomic_DNA"/>
</dbReference>
<dbReference type="EMBL" id="EU405153">
    <property type="protein sequence ID" value="ABZ02814.1"/>
    <property type="molecule type" value="Genomic_DNA"/>
</dbReference>
<dbReference type="EMBL" id="EU405155">
    <property type="protein sequence ID" value="ABZ02816.1"/>
    <property type="molecule type" value="Genomic_DNA"/>
</dbReference>
<dbReference type="EMBL" id="EU405159">
    <property type="protein sequence ID" value="ABZ02820.1"/>
    <property type="molecule type" value="Genomic_DNA"/>
</dbReference>
<dbReference type="EMBL" id="EU405161">
    <property type="protein sequence ID" value="ABZ02822.1"/>
    <property type="molecule type" value="Genomic_DNA"/>
</dbReference>
<dbReference type="EMBL" id="EU405162">
    <property type="protein sequence ID" value="ABZ02823.1"/>
    <property type="molecule type" value="Genomic_DNA"/>
</dbReference>
<dbReference type="EMBL" id="EU405163">
    <property type="protein sequence ID" value="ABZ02824.1"/>
    <property type="molecule type" value="Genomic_DNA"/>
</dbReference>
<dbReference type="EMBL" id="EU405164">
    <property type="protein sequence ID" value="ABZ02825.1"/>
    <property type="molecule type" value="Genomic_DNA"/>
</dbReference>
<dbReference type="EMBL" id="EU405173">
    <property type="protein sequence ID" value="ABZ02834.1"/>
    <property type="molecule type" value="Genomic_DNA"/>
</dbReference>
<dbReference type="EMBL" id="EU405174">
    <property type="protein sequence ID" value="ABZ02835.1"/>
    <property type="molecule type" value="Genomic_DNA"/>
</dbReference>
<dbReference type="EMBL" id="EU405175">
    <property type="protein sequence ID" value="ABZ02836.1"/>
    <property type="molecule type" value="Genomic_DNA"/>
</dbReference>
<dbReference type="EMBL" id="EU405177">
    <property type="protein sequence ID" value="ABZ02838.1"/>
    <property type="molecule type" value="Genomic_DNA"/>
</dbReference>
<dbReference type="EMBL" id="EU405180">
    <property type="protein sequence ID" value="ABZ02841.1"/>
    <property type="molecule type" value="Genomic_DNA"/>
</dbReference>
<dbReference type="EMBL" id="EU405181">
    <property type="protein sequence ID" value="ABZ02842.1"/>
    <property type="molecule type" value="Genomic_DNA"/>
</dbReference>
<dbReference type="EMBL" id="EU405183">
    <property type="protein sequence ID" value="ABZ02844.1"/>
    <property type="molecule type" value="Genomic_DNA"/>
</dbReference>
<dbReference type="EMBL" id="EU405188">
    <property type="protein sequence ID" value="ABZ02849.1"/>
    <property type="molecule type" value="Genomic_DNA"/>
</dbReference>
<dbReference type="EMBL" id="EU405190">
    <property type="protein sequence ID" value="ABZ02851.1"/>
    <property type="molecule type" value="Genomic_DNA"/>
</dbReference>
<dbReference type="EMBL" id="EU405192">
    <property type="protein sequence ID" value="ABZ02853.1"/>
    <property type="molecule type" value="Genomic_DNA"/>
</dbReference>
<dbReference type="EMBL" id="EU405193">
    <property type="protein sequence ID" value="ABZ02854.1"/>
    <property type="molecule type" value="Genomic_DNA"/>
</dbReference>
<dbReference type="EMBL" id="EU405194">
    <property type="protein sequence ID" value="ABZ02855.1"/>
    <property type="molecule type" value="Genomic_DNA"/>
</dbReference>
<dbReference type="EMBL" id="EU405195">
    <property type="protein sequence ID" value="ABZ02856.1"/>
    <property type="molecule type" value="Genomic_DNA"/>
</dbReference>
<dbReference type="EMBL" id="EU405197">
    <property type="protein sequence ID" value="ABZ02858.1"/>
    <property type="molecule type" value="Genomic_DNA"/>
</dbReference>
<dbReference type="EMBL" id="EU405205">
    <property type="protein sequence ID" value="ABZ02866.1"/>
    <property type="molecule type" value="Genomic_DNA"/>
</dbReference>
<dbReference type="EMBL" id="EU405206">
    <property type="protein sequence ID" value="ABZ02867.1"/>
    <property type="molecule type" value="Genomic_DNA"/>
</dbReference>
<dbReference type="EMBL" id="EU405208">
    <property type="protein sequence ID" value="ABZ02869.1"/>
    <property type="molecule type" value="Genomic_DNA"/>
</dbReference>
<dbReference type="EMBL" id="EU405209">
    <property type="protein sequence ID" value="ABZ02870.1"/>
    <property type="molecule type" value="Genomic_DNA"/>
</dbReference>
<dbReference type="EMBL" id="EU405210">
    <property type="protein sequence ID" value="ABZ02871.1"/>
    <property type="molecule type" value="Genomic_DNA"/>
</dbReference>
<dbReference type="EMBL" id="EU405212">
    <property type="protein sequence ID" value="ABZ02873.1"/>
    <property type="molecule type" value="Genomic_DNA"/>
</dbReference>
<dbReference type="EMBL" id="EU405213">
    <property type="protein sequence ID" value="ABZ02874.1"/>
    <property type="molecule type" value="Genomic_DNA"/>
</dbReference>
<dbReference type="EMBL" id="EU405214">
    <property type="protein sequence ID" value="ABZ02875.1"/>
    <property type="molecule type" value="Genomic_DNA"/>
</dbReference>
<dbReference type="EMBL" id="EU405215">
    <property type="protein sequence ID" value="ABZ02876.1"/>
    <property type="molecule type" value="Genomic_DNA"/>
</dbReference>
<dbReference type="EMBL" id="EU405217">
    <property type="protein sequence ID" value="ABZ02878.1"/>
    <property type="molecule type" value="Genomic_DNA"/>
</dbReference>
<dbReference type="EMBL" id="EU405219">
    <property type="protein sequence ID" value="ABZ02880.1"/>
    <property type="molecule type" value="Genomic_DNA"/>
</dbReference>
<dbReference type="EMBL" id="EU405223">
    <property type="protein sequence ID" value="ABZ02884.1"/>
    <property type="molecule type" value="Genomic_DNA"/>
</dbReference>
<dbReference type="EMBL" id="EU405224">
    <property type="protein sequence ID" value="ABZ02885.1"/>
    <property type="molecule type" value="Genomic_DNA"/>
</dbReference>
<dbReference type="EMBL" id="EU405228">
    <property type="protein sequence ID" value="ABZ02889.1"/>
    <property type="molecule type" value="Genomic_DNA"/>
</dbReference>
<dbReference type="EMBL" id="EU405231">
    <property type="protein sequence ID" value="ABZ02892.1"/>
    <property type="molecule type" value="Genomic_DNA"/>
</dbReference>
<dbReference type="EMBL" id="EU405232">
    <property type="protein sequence ID" value="ABZ02893.1"/>
    <property type="molecule type" value="Genomic_DNA"/>
</dbReference>
<dbReference type="EMBL" id="EU405237">
    <property type="protein sequence ID" value="ABZ02898.1"/>
    <property type="molecule type" value="Genomic_DNA"/>
</dbReference>
<dbReference type="PIR" id="T08456">
    <property type="entry name" value="T08456"/>
</dbReference>
<dbReference type="RefSeq" id="NP_190811.1">
    <property type="nucleotide sequence ID" value="NM_115103.4"/>
</dbReference>
<dbReference type="PDB" id="7XDD">
    <property type="method" value="EM"/>
    <property type="resolution" value="2.93 A"/>
    <property type="chains" value="A=4-541"/>
</dbReference>
<dbReference type="PDB" id="7XEY">
    <property type="method" value="X-ray"/>
    <property type="resolution" value="2.29 A"/>
    <property type="chains" value="B=1-541"/>
</dbReference>
<dbReference type="PDB" id="8ZW9">
    <property type="method" value="EM"/>
    <property type="resolution" value="3.03 A"/>
    <property type="chains" value="C=1-541"/>
</dbReference>
<dbReference type="PDB" id="8ZWA">
    <property type="method" value="EM"/>
    <property type="resolution" value="3.48 A"/>
    <property type="chains" value="C=1-541"/>
</dbReference>
<dbReference type="PDBsum" id="7XDD"/>
<dbReference type="PDBsum" id="7XEY"/>
<dbReference type="PDBsum" id="8ZW9"/>
<dbReference type="PDBsum" id="8ZWA"/>
<dbReference type="EMDB" id="EMD-33144"/>
<dbReference type="SMR" id="Q9S745"/>
<dbReference type="BioGRID" id="9726">
    <property type="interactions" value="2"/>
</dbReference>
<dbReference type="ComplexPortal" id="CPX-1324">
    <property type="entry name" value="EDS1-PAD4 complex, variant EDS1"/>
</dbReference>
<dbReference type="ComplexPortal" id="CPX-1325">
    <property type="entry name" value="EDS1-PAD4-SAG101 complex, variant EDS1"/>
</dbReference>
<dbReference type="ComplexPortal" id="CPX-1618">
    <property type="entry name" value="EDS1-PAD4 complex, variant EDS1B"/>
</dbReference>
<dbReference type="ComplexPortal" id="CPX-1619">
    <property type="entry name" value="EDS1-PAD4-SAG101 complex, variant EDS1B"/>
</dbReference>
<dbReference type="FunCoup" id="Q9S745">
    <property type="interactions" value="546"/>
</dbReference>
<dbReference type="IntAct" id="Q9S745">
    <property type="interactions" value="1"/>
</dbReference>
<dbReference type="STRING" id="3702.Q9S745"/>
<dbReference type="ESTHER" id="arath-PAD4">
    <property type="family name" value="Plant_lipase_EDS1-like"/>
</dbReference>
<dbReference type="PaxDb" id="3702-AT3G52430.1"/>
<dbReference type="ProteomicsDB" id="226046"/>
<dbReference type="EnsemblPlants" id="AT3G52430.1">
    <property type="protein sequence ID" value="AT3G52430.1"/>
    <property type="gene ID" value="AT3G52430"/>
</dbReference>
<dbReference type="GeneID" id="824408"/>
<dbReference type="Gramene" id="AT3G52430.1">
    <property type="protein sequence ID" value="AT3G52430.1"/>
    <property type="gene ID" value="AT3G52430"/>
</dbReference>
<dbReference type="KEGG" id="ath:AT3G52430"/>
<dbReference type="Araport" id="AT3G52430"/>
<dbReference type="TAIR" id="AT3G52430">
    <property type="gene designation" value="PAD4"/>
</dbReference>
<dbReference type="eggNOG" id="ENOG502SBGF">
    <property type="taxonomic scope" value="Eukaryota"/>
</dbReference>
<dbReference type="HOGENOM" id="CLU_016367_2_0_1"/>
<dbReference type="InParanoid" id="Q9S745"/>
<dbReference type="OMA" id="YKIFDKW"/>
<dbReference type="PhylomeDB" id="Q9S745"/>
<dbReference type="PRO" id="PR:Q9S745"/>
<dbReference type="Proteomes" id="UP000006548">
    <property type="component" value="Chromosome 3"/>
</dbReference>
<dbReference type="ExpressionAtlas" id="Q9S745">
    <property type="expression patterns" value="baseline and differential"/>
</dbReference>
<dbReference type="GO" id="GO:0005737">
    <property type="term" value="C:cytoplasm"/>
    <property type="evidence" value="ECO:0000314"/>
    <property type="project" value="UniProtKB"/>
</dbReference>
<dbReference type="GO" id="GO:0005829">
    <property type="term" value="C:cytosol"/>
    <property type="evidence" value="ECO:0000314"/>
    <property type="project" value="ComplexPortal"/>
</dbReference>
<dbReference type="GO" id="GO:0106093">
    <property type="term" value="C:EDS1 disease-resistance complex"/>
    <property type="evidence" value="ECO:0000314"/>
    <property type="project" value="ComplexPortal"/>
</dbReference>
<dbReference type="GO" id="GO:0005634">
    <property type="term" value="C:nucleus"/>
    <property type="evidence" value="ECO:0000314"/>
    <property type="project" value="UniProtKB"/>
</dbReference>
<dbReference type="GO" id="GO:0016298">
    <property type="term" value="F:lipase activity"/>
    <property type="evidence" value="ECO:0000250"/>
    <property type="project" value="TAIR"/>
</dbReference>
<dbReference type="GO" id="GO:0016740">
    <property type="term" value="F:transferase activity"/>
    <property type="evidence" value="ECO:0007669"/>
    <property type="project" value="UniProtKB-KW"/>
</dbReference>
<dbReference type="GO" id="GO:0010618">
    <property type="term" value="P:aerenchyma formation"/>
    <property type="evidence" value="ECO:0000315"/>
    <property type="project" value="TAIR"/>
</dbReference>
<dbReference type="GO" id="GO:0071327">
    <property type="term" value="P:cellular response to trehalose stimulus"/>
    <property type="evidence" value="ECO:0000314"/>
    <property type="project" value="UniProtKB"/>
</dbReference>
<dbReference type="GO" id="GO:0042742">
    <property type="term" value="P:defense response to bacterium"/>
    <property type="evidence" value="ECO:0000315"/>
    <property type="project" value="UniProtKB"/>
</dbReference>
<dbReference type="GO" id="GO:0050829">
    <property type="term" value="P:defense response to Gram-negative bacterium"/>
    <property type="evidence" value="ECO:0000315"/>
    <property type="project" value="TAIR"/>
</dbReference>
<dbReference type="GO" id="GO:0002213">
    <property type="term" value="P:defense response to insect"/>
    <property type="evidence" value="ECO:0000315"/>
    <property type="project" value="TAIR"/>
</dbReference>
<dbReference type="GO" id="GO:0009873">
    <property type="term" value="P:ethylene-activated signaling pathway"/>
    <property type="evidence" value="ECO:0007669"/>
    <property type="project" value="UniProtKB-KW"/>
</dbReference>
<dbReference type="GO" id="GO:0060866">
    <property type="term" value="P:leaf abscission"/>
    <property type="evidence" value="ECO:0000315"/>
    <property type="project" value="TAIR"/>
</dbReference>
<dbReference type="GO" id="GO:0010150">
    <property type="term" value="P:leaf senescence"/>
    <property type="evidence" value="ECO:0000315"/>
    <property type="project" value="TAIR"/>
</dbReference>
<dbReference type="GO" id="GO:0016042">
    <property type="term" value="P:lipid catabolic process"/>
    <property type="evidence" value="ECO:0007669"/>
    <property type="project" value="UniProtKB-KW"/>
</dbReference>
<dbReference type="GO" id="GO:0031348">
    <property type="term" value="P:negative regulation of defense response"/>
    <property type="evidence" value="ECO:0000315"/>
    <property type="project" value="TAIR"/>
</dbReference>
<dbReference type="GO" id="GO:0010105">
    <property type="term" value="P:negative regulation of ethylene-activated signaling pathway"/>
    <property type="evidence" value="ECO:0000316"/>
    <property type="project" value="UniProtKB"/>
</dbReference>
<dbReference type="GO" id="GO:0009626">
    <property type="term" value="P:plant-type hypersensitive response"/>
    <property type="evidence" value="ECO:0000315"/>
    <property type="project" value="UniProtKB"/>
</dbReference>
<dbReference type="GO" id="GO:1901183">
    <property type="term" value="P:positive regulation of camalexin biosynthetic process"/>
    <property type="evidence" value="ECO:0000315"/>
    <property type="project" value="UniProtKB"/>
</dbReference>
<dbReference type="GO" id="GO:1900426">
    <property type="term" value="P:positive regulation of defense response to bacterium"/>
    <property type="evidence" value="ECO:0000315"/>
    <property type="project" value="UniProtKB"/>
</dbReference>
<dbReference type="GO" id="GO:1900367">
    <property type="term" value="P:positive regulation of defense response to insect"/>
    <property type="evidence" value="ECO:0000315"/>
    <property type="project" value="UniProtKB"/>
</dbReference>
<dbReference type="GO" id="GO:0080151">
    <property type="term" value="P:positive regulation of salicylic acid mediated signaling pathway"/>
    <property type="evidence" value="ECO:0000316"/>
    <property type="project" value="UniProtKB"/>
</dbReference>
<dbReference type="GO" id="GO:0010310">
    <property type="term" value="P:regulation of hydrogen peroxide metabolic process"/>
    <property type="evidence" value="ECO:0000315"/>
    <property type="project" value="TAIR"/>
</dbReference>
<dbReference type="GO" id="GO:2000022">
    <property type="term" value="P:regulation of jasmonic acid mediated signaling pathway"/>
    <property type="evidence" value="ECO:0000316"/>
    <property type="project" value="UniProtKB"/>
</dbReference>
<dbReference type="GO" id="GO:0080142">
    <property type="term" value="P:regulation of salicylic acid biosynthetic process"/>
    <property type="evidence" value="ECO:0000315"/>
    <property type="project" value="UniProtKB"/>
</dbReference>
<dbReference type="GO" id="GO:2000031">
    <property type="term" value="P:regulation of salicylic acid mediated signaling pathway"/>
    <property type="evidence" value="ECO:0000315"/>
    <property type="project" value="UniProtKB"/>
</dbReference>
<dbReference type="GO" id="GO:0009617">
    <property type="term" value="P:response to bacterium"/>
    <property type="evidence" value="ECO:0000314"/>
    <property type="project" value="UniProtKB"/>
</dbReference>
<dbReference type="GO" id="GO:0001666">
    <property type="term" value="P:response to hypoxia"/>
    <property type="evidence" value="ECO:0000315"/>
    <property type="project" value="TAIR"/>
</dbReference>
<dbReference type="GO" id="GO:0009625">
    <property type="term" value="P:response to insect"/>
    <property type="evidence" value="ECO:0000314"/>
    <property type="project" value="UniProtKB"/>
</dbReference>
<dbReference type="GO" id="GO:0051707">
    <property type="term" value="P:response to other organism"/>
    <property type="evidence" value="ECO:0000270"/>
    <property type="project" value="TAIR"/>
</dbReference>
<dbReference type="GO" id="GO:0009751">
    <property type="term" value="P:response to salicylic acid"/>
    <property type="evidence" value="ECO:0000314"/>
    <property type="project" value="UniProtKB"/>
</dbReference>
<dbReference type="GO" id="GO:0010225">
    <property type="term" value="P:response to UV-C"/>
    <property type="evidence" value="ECO:0000315"/>
    <property type="project" value="UniProtKB"/>
</dbReference>
<dbReference type="GO" id="GO:0009627">
    <property type="term" value="P:systemic acquired resistance"/>
    <property type="evidence" value="ECO:0000270"/>
    <property type="project" value="TAIR"/>
</dbReference>
<dbReference type="GO" id="GO:0009862">
    <property type="term" value="P:systemic acquired resistance, salicylic acid mediated signaling pathway"/>
    <property type="evidence" value="ECO:0000315"/>
    <property type="project" value="UniProtKB"/>
</dbReference>
<dbReference type="CDD" id="cd00741">
    <property type="entry name" value="Lipase"/>
    <property type="match status" value="1"/>
</dbReference>
<dbReference type="Gene3D" id="3.40.50.1820">
    <property type="entry name" value="alpha/beta hydrolase"/>
    <property type="match status" value="1"/>
</dbReference>
<dbReference type="InterPro" id="IPR029058">
    <property type="entry name" value="AB_hydrolase_fold"/>
</dbReference>
<dbReference type="InterPro" id="IPR041266">
    <property type="entry name" value="EDS1_EP"/>
</dbReference>
<dbReference type="InterPro" id="IPR002921">
    <property type="entry name" value="Fungal_lipase-type"/>
</dbReference>
<dbReference type="PANTHER" id="PTHR47413">
    <property type="entry name" value="LIPASE-LIKE PAD4"/>
    <property type="match status" value="1"/>
</dbReference>
<dbReference type="PANTHER" id="PTHR47413:SF2">
    <property type="entry name" value="LIPASE-LIKE PAD4"/>
    <property type="match status" value="1"/>
</dbReference>
<dbReference type="Pfam" id="PF18117">
    <property type="entry name" value="EDS1_EP"/>
    <property type="match status" value="1"/>
</dbReference>
<dbReference type="Pfam" id="PF01764">
    <property type="entry name" value="Lipase_3"/>
    <property type="match status" value="1"/>
</dbReference>
<dbReference type="SUPFAM" id="SSF53474">
    <property type="entry name" value="alpha/beta-Hydrolases"/>
    <property type="match status" value="1"/>
</dbReference>
<dbReference type="PROSITE" id="PS00120">
    <property type="entry name" value="LIPASE_SER"/>
    <property type="match status" value="1"/>
</dbReference>
<name>PAD4_ARATH</name>
<organism>
    <name type="scientific">Arabidopsis thaliana</name>
    <name type="common">Mouse-ear cress</name>
    <dbReference type="NCBI Taxonomy" id="3702"/>
    <lineage>
        <taxon>Eukaryota</taxon>
        <taxon>Viridiplantae</taxon>
        <taxon>Streptophyta</taxon>
        <taxon>Embryophyta</taxon>
        <taxon>Tracheophyta</taxon>
        <taxon>Spermatophyta</taxon>
        <taxon>Magnoliopsida</taxon>
        <taxon>eudicotyledons</taxon>
        <taxon>Gunneridae</taxon>
        <taxon>Pentapetalae</taxon>
        <taxon>rosids</taxon>
        <taxon>malvids</taxon>
        <taxon>Brassicales</taxon>
        <taxon>Brassicaceae</taxon>
        <taxon>Camelineae</taxon>
        <taxon>Arabidopsis</taxon>
    </lineage>
</organism>
<gene>
    <name type="primary">PAD4</name>
    <name type="synonym">EDS9</name>
    <name type="ordered locus">At3g52430</name>
    <name type="ORF">F22O6.190</name>
</gene>
<accession>Q9S745</accession>
<accession>B0ZUC0</accession>
<proteinExistence type="evidence at protein level"/>
<evidence type="ECO:0000250" key="1">
    <source>
        <dbReference type="UniProtKB" id="P19515"/>
    </source>
</evidence>
<evidence type="ECO:0000269" key="2">
    <source>
    </source>
</evidence>
<evidence type="ECO:0000269" key="3">
    <source>
    </source>
</evidence>
<evidence type="ECO:0000269" key="4">
    <source>
    </source>
</evidence>
<evidence type="ECO:0000269" key="5">
    <source>
    </source>
</evidence>
<evidence type="ECO:0000269" key="6">
    <source>
    </source>
</evidence>
<evidence type="ECO:0000269" key="7">
    <source>
    </source>
</evidence>
<evidence type="ECO:0000269" key="8">
    <source>
    </source>
</evidence>
<evidence type="ECO:0000269" key="9">
    <source>
    </source>
</evidence>
<evidence type="ECO:0000269" key="10">
    <source>
    </source>
</evidence>
<evidence type="ECO:0000269" key="11">
    <source>
    </source>
</evidence>
<evidence type="ECO:0000269" key="12">
    <source>
    </source>
</evidence>
<evidence type="ECO:0000269" key="13">
    <source>
    </source>
</evidence>
<evidence type="ECO:0000269" key="14">
    <source>
    </source>
</evidence>
<evidence type="ECO:0000269" key="15">
    <source>
    </source>
</evidence>
<evidence type="ECO:0000269" key="16">
    <source>
    </source>
</evidence>
<evidence type="ECO:0000269" key="17">
    <source>
    </source>
</evidence>
<evidence type="ECO:0000269" key="18">
    <source>
    </source>
</evidence>
<evidence type="ECO:0000269" key="19">
    <source>
    </source>
</evidence>
<evidence type="ECO:0000269" key="20">
    <source>
    </source>
</evidence>
<evidence type="ECO:0000269" key="21">
    <source>
    </source>
</evidence>
<evidence type="ECO:0000269" key="22">
    <source>
    </source>
</evidence>
<evidence type="ECO:0000269" key="23">
    <source>
    </source>
</evidence>
<evidence type="ECO:0000269" key="24">
    <source>
    </source>
</evidence>
<evidence type="ECO:0000269" key="25">
    <source>
    </source>
</evidence>
<evidence type="ECO:0000269" key="26">
    <source>
    </source>
</evidence>
<evidence type="ECO:0000269" key="27">
    <source>
    </source>
</evidence>
<evidence type="ECO:0000269" key="28">
    <source>
    </source>
</evidence>
<evidence type="ECO:0000269" key="29">
    <source>
    </source>
</evidence>
<evidence type="ECO:0000269" key="30">
    <source>
    </source>
</evidence>
<evidence type="ECO:0000269" key="31">
    <source>
    </source>
</evidence>
<evidence type="ECO:0000269" key="32">
    <source>
    </source>
</evidence>
<evidence type="ECO:0000269" key="33">
    <source>
    </source>
</evidence>
<evidence type="ECO:0000269" key="34">
    <source>
    </source>
</evidence>
<evidence type="ECO:0000305" key="35"/>
<evidence type="ECO:0007829" key="36">
    <source>
        <dbReference type="PDB" id="7XDD"/>
    </source>
</evidence>
<evidence type="ECO:0007829" key="37">
    <source>
        <dbReference type="PDB" id="7XEY"/>
    </source>
</evidence>
<evidence type="ECO:0007829" key="38">
    <source>
        <dbReference type="PDB" id="8ZWA"/>
    </source>
</evidence>
<sequence>MDDCRFETSELQASVMISTPLFTDSWSSCNTANCNGSIKIHDIAGITYVAIPAVSMIQLGNLVGLPVTGDVLFPGLSSDEPLPMVDAAILKLFLQLKIKEGLELELLGKKLVVITGHSTGGALAAFTALWLLSQSSPPSFRVFCITFGSPLLGNQSLSTSISRSRLAHNFCHVVSIHDLVPRSSNEQFWPFGTYLFCSDKGGVCLDNAGSVRLMFNILNTTATQNTEEHQRYGHYVFTLSHMFLKSRSFLGGSIPDNSYQAGVALAVEALGFSNDDTSGVLVKECIETATRIVRAPILRSAELANELASVLPARLEIQWYKDRCDASEEQLGYYDFFKRYSLKRDFKVNMSRIRLAKFWDTVIKMVETNELPFDFHLGKKWIYASQFYQLLAEPLDIANFYKNRDIKTGGHYLEGNRPKRYEVIDKWQKGVKVPEECVRSRYASTTQDTCFWAKLEQAKEWLDEARKESSDPQRRSLLREKIVPFESYANTLVTKKEVSLDVKAKNSSYSVWEANLKEFKCKMGYENEIEMVVDESDAMET</sequence>
<feature type="chain" id="PRO_0000429488" description="Lipase-like PAD4">
    <location>
        <begin position="1"/>
        <end position="541"/>
    </location>
</feature>
<feature type="active site" description="Nucleophile" evidence="1">
    <location>
        <position position="118"/>
    </location>
</feature>
<feature type="active site" description="Charge relay system" evidence="1">
    <location>
        <position position="178"/>
    </location>
</feature>
<feature type="active site" description="Charge relay system" evidence="1">
    <location>
        <position position="229"/>
    </location>
</feature>
<feature type="mutagenesis site" description="Loss of interaction with EDS1; when associated with S-21. Loss of interaction with EDS1; when associated with S-21 and A-143." evidence="30">
    <original>M</original>
    <variation>A</variation>
    <location>
        <position position="16"/>
    </location>
</feature>
<feature type="mutagenesis site" description="Loss of interaction with EDS1; when associated with A-16. Loss of interaction with EDS1; when associated with A-16 and A-143." evidence="30">
    <original>L</original>
    <variation>S</variation>
    <location>
        <position position="21"/>
    </location>
</feature>
<feature type="mutagenesis site" description="Loss of antibiosis and deterrence against green peach aphid (GPA, M.persicae) feeding, but normal leaf senescence and plant defense against pathogens." evidence="26">
    <original>S</original>
    <variation>A</variation>
    <location>
        <position position="118"/>
    </location>
</feature>
<feature type="mutagenesis site" description="Loss of interaction with EDS1; when associated with A-16 and S-21." evidence="30">
    <original>F</original>
    <variation>A</variation>
    <location>
        <position position="143"/>
    </location>
</feature>
<feature type="helix" evidence="37">
    <location>
        <begin position="9"/>
        <end position="18"/>
    </location>
</feature>
<feature type="helix" evidence="37">
    <location>
        <begin position="20"/>
        <end position="35"/>
    </location>
</feature>
<feature type="strand" evidence="37">
    <location>
        <begin position="39"/>
        <end position="43"/>
    </location>
</feature>
<feature type="strand" evidence="37">
    <location>
        <begin position="46"/>
        <end position="51"/>
    </location>
</feature>
<feature type="strand" evidence="37">
    <location>
        <begin position="55"/>
        <end position="57"/>
    </location>
</feature>
<feature type="strand" evidence="37">
    <location>
        <begin position="62"/>
        <end position="64"/>
    </location>
</feature>
<feature type="strand" evidence="37">
    <location>
        <begin position="67"/>
        <end position="70"/>
    </location>
</feature>
<feature type="strand" evidence="36">
    <location>
        <begin position="74"/>
        <end position="76"/>
    </location>
</feature>
<feature type="strand" evidence="37">
    <location>
        <begin position="79"/>
        <end position="81"/>
    </location>
</feature>
<feature type="strand" evidence="37">
    <location>
        <begin position="84"/>
        <end position="86"/>
    </location>
</feature>
<feature type="helix" evidence="37">
    <location>
        <begin position="87"/>
        <end position="95"/>
    </location>
</feature>
<feature type="helix" evidence="37">
    <location>
        <begin position="98"/>
        <end position="106"/>
    </location>
</feature>
<feature type="strand" evidence="37">
    <location>
        <begin position="111"/>
        <end position="117"/>
    </location>
</feature>
<feature type="helix" evidence="37">
    <location>
        <begin position="119"/>
        <end position="132"/>
    </location>
</feature>
<feature type="strand" evidence="37">
    <location>
        <begin position="134"/>
        <end position="136"/>
    </location>
</feature>
<feature type="strand" evidence="37">
    <location>
        <begin position="139"/>
        <end position="148"/>
    </location>
</feature>
<feature type="helix" evidence="37">
    <location>
        <begin position="155"/>
        <end position="163"/>
    </location>
</feature>
<feature type="helix" evidence="37">
    <location>
        <begin position="167"/>
        <end position="169"/>
    </location>
</feature>
<feature type="strand" evidence="37">
    <location>
        <begin position="170"/>
        <end position="175"/>
    </location>
</feature>
<feature type="helix" evidence="37">
    <location>
        <begin position="179"/>
        <end position="182"/>
    </location>
</feature>
<feature type="strand" evidence="37">
    <location>
        <begin position="192"/>
        <end position="198"/>
    </location>
</feature>
<feature type="strand" evidence="37">
    <location>
        <begin position="201"/>
        <end position="205"/>
    </location>
</feature>
<feature type="helix" evidence="37">
    <location>
        <begin position="208"/>
        <end position="219"/>
    </location>
</feature>
<feature type="helix" evidence="37">
    <location>
        <begin position="226"/>
        <end position="230"/>
    </location>
</feature>
<feature type="helix" evidence="37">
    <location>
        <begin position="232"/>
        <end position="241"/>
    </location>
</feature>
<feature type="helix" evidence="37">
    <location>
        <begin position="242"/>
        <end position="244"/>
    </location>
</feature>
<feature type="helix" evidence="37">
    <location>
        <begin position="258"/>
        <end position="270"/>
    </location>
</feature>
<feature type="strand" evidence="38">
    <location>
        <begin position="274"/>
        <end position="276"/>
    </location>
</feature>
<feature type="helix" evidence="37">
    <location>
        <begin position="277"/>
        <end position="287"/>
    </location>
</feature>
<feature type="helix" evidence="37">
    <location>
        <begin position="296"/>
        <end position="326"/>
    </location>
</feature>
<feature type="strand" evidence="36">
    <location>
        <begin position="327"/>
        <end position="329"/>
    </location>
</feature>
<feature type="helix" evidence="37">
    <location>
        <begin position="332"/>
        <end position="339"/>
    </location>
</feature>
<feature type="helix" evidence="37">
    <location>
        <begin position="343"/>
        <end position="367"/>
    </location>
</feature>
<feature type="helix" evidence="37">
    <location>
        <begin position="375"/>
        <end position="377"/>
    </location>
</feature>
<feature type="helix" evidence="37">
    <location>
        <begin position="379"/>
        <end position="403"/>
    </location>
</feature>
<feature type="turn" evidence="36">
    <location>
        <begin position="406"/>
        <end position="409"/>
    </location>
</feature>
<feature type="turn" evidence="37">
    <location>
        <begin position="412"/>
        <end position="415"/>
    </location>
</feature>
<feature type="helix" evidence="37">
    <location>
        <begin position="419"/>
        <end position="427"/>
    </location>
</feature>
<feature type="helix" evidence="37">
    <location>
        <begin position="428"/>
        <end position="430"/>
    </location>
</feature>
<feature type="helix" evidence="37">
    <location>
        <begin position="451"/>
        <end position="467"/>
    </location>
</feature>
<feature type="helix" evidence="37">
    <location>
        <begin position="473"/>
        <end position="481"/>
    </location>
</feature>
<feature type="helix" evidence="37">
    <location>
        <begin position="483"/>
        <end position="494"/>
    </location>
</feature>
<feature type="helix" evidence="37">
    <location>
        <begin position="500"/>
        <end position="503"/>
    </location>
</feature>
<feature type="helix" evidence="37">
    <location>
        <begin position="508"/>
        <end position="522"/>
    </location>
</feature>
<protein>
    <recommendedName>
        <fullName>Lipase-like PAD4</fullName>
        <ecNumber>2.3.1.-</ecNumber>
    </recommendedName>
    <alternativeName>
        <fullName>Protein ENHANCED DISEASE SUSCEPTIBILITY 9</fullName>
    </alternativeName>
    <alternativeName>
        <fullName>Protein PHYTOALEXIN DEFICIENT 4</fullName>
        <shortName>AtPAD4</shortName>
    </alternativeName>
</protein>
<keyword id="KW-0002">3D-structure</keyword>
<keyword id="KW-0963">Cytoplasm</keyword>
<keyword id="KW-0936">Ethylene signaling pathway</keyword>
<keyword id="KW-0378">Hydrolase</keyword>
<keyword id="KW-0381">Hypersensitive response</keyword>
<keyword id="KW-1184">Jasmonic acid signaling pathway</keyword>
<keyword id="KW-0442">Lipid degradation</keyword>
<keyword id="KW-0443">Lipid metabolism</keyword>
<keyword id="KW-0539">Nucleus</keyword>
<keyword id="KW-0611">Plant defense</keyword>
<keyword id="KW-1185">Reference proteome</keyword>
<keyword id="KW-0808">Transferase</keyword>